<keyword id="KW-1185">Reference proteome</keyword>
<keyword id="KW-0687">Ribonucleoprotein</keyword>
<keyword id="KW-0689">Ribosomal protein</keyword>
<keyword id="KW-0694">RNA-binding</keyword>
<keyword id="KW-0699">rRNA-binding</keyword>
<evidence type="ECO:0000255" key="1">
    <source>
        <dbReference type="HAMAP-Rule" id="MF_01310"/>
    </source>
</evidence>
<evidence type="ECO:0000256" key="2">
    <source>
        <dbReference type="SAM" id="MobiDB-lite"/>
    </source>
</evidence>
<evidence type="ECO:0000305" key="3"/>
<comment type="function">
    <text evidence="1">Located on the platform of the 30S subunit, it bridges several disparate RNA helices of the 16S rRNA. Forms part of the Shine-Dalgarno cleft in the 70S ribosome.</text>
</comment>
<comment type="subunit">
    <text evidence="1">Part of the 30S ribosomal subunit. Interacts with proteins S7 and S18. Binds to IF-3.</text>
</comment>
<comment type="similarity">
    <text evidence="1">Belongs to the universal ribosomal protein uS11 family.</text>
</comment>
<protein>
    <recommendedName>
        <fullName evidence="1">Small ribosomal subunit protein uS11</fullName>
    </recommendedName>
    <alternativeName>
        <fullName evidence="3">30S ribosomal protein S11</fullName>
    </alternativeName>
</protein>
<gene>
    <name evidence="1" type="primary">rpsK</name>
    <name type="ordered locus">MAP_4231</name>
</gene>
<name>RS11_MYCPA</name>
<organism>
    <name type="scientific">Mycolicibacterium paratuberculosis (strain ATCC BAA-968 / K-10)</name>
    <name type="common">Mycobacterium paratuberculosis</name>
    <dbReference type="NCBI Taxonomy" id="262316"/>
    <lineage>
        <taxon>Bacteria</taxon>
        <taxon>Bacillati</taxon>
        <taxon>Actinomycetota</taxon>
        <taxon>Actinomycetes</taxon>
        <taxon>Mycobacteriales</taxon>
        <taxon>Mycobacteriaceae</taxon>
        <taxon>Mycobacterium</taxon>
        <taxon>Mycobacterium avium complex (MAC)</taxon>
    </lineage>
</organism>
<proteinExistence type="inferred from homology"/>
<accession>Q73S45</accession>
<sequence length="138" mass="14668">MPPAKKAAAAPKKGQKTRRREKKNVPHGAAHIKSTFNNTIVTITDPQGNVIAWASSGHVGFKGSRKSTPFAAQLAAENAARKAQEHGVRKVDVFVKGPGSGRETAIRSLQAAGLEVGAISDVTPQPHNGVRPPKRRRV</sequence>
<dbReference type="EMBL" id="AE016958">
    <property type="protein sequence ID" value="AAS06781.1"/>
    <property type="molecule type" value="Genomic_DNA"/>
</dbReference>
<dbReference type="RefSeq" id="WP_003879486.1">
    <property type="nucleotide sequence ID" value="NZ_CP106873.1"/>
</dbReference>
<dbReference type="SMR" id="Q73S45"/>
<dbReference type="STRING" id="262316.MAP_4231"/>
<dbReference type="GeneID" id="75271914"/>
<dbReference type="KEGG" id="mpa:MAP_4231"/>
<dbReference type="eggNOG" id="COG0100">
    <property type="taxonomic scope" value="Bacteria"/>
</dbReference>
<dbReference type="HOGENOM" id="CLU_072439_5_0_11"/>
<dbReference type="Proteomes" id="UP000000580">
    <property type="component" value="Chromosome"/>
</dbReference>
<dbReference type="GO" id="GO:1990904">
    <property type="term" value="C:ribonucleoprotein complex"/>
    <property type="evidence" value="ECO:0007669"/>
    <property type="project" value="UniProtKB-KW"/>
</dbReference>
<dbReference type="GO" id="GO:0005840">
    <property type="term" value="C:ribosome"/>
    <property type="evidence" value="ECO:0007669"/>
    <property type="project" value="UniProtKB-KW"/>
</dbReference>
<dbReference type="GO" id="GO:0019843">
    <property type="term" value="F:rRNA binding"/>
    <property type="evidence" value="ECO:0007669"/>
    <property type="project" value="UniProtKB-UniRule"/>
</dbReference>
<dbReference type="GO" id="GO:0003735">
    <property type="term" value="F:structural constituent of ribosome"/>
    <property type="evidence" value="ECO:0007669"/>
    <property type="project" value="InterPro"/>
</dbReference>
<dbReference type="GO" id="GO:0006412">
    <property type="term" value="P:translation"/>
    <property type="evidence" value="ECO:0007669"/>
    <property type="project" value="UniProtKB-UniRule"/>
</dbReference>
<dbReference type="FunFam" id="3.30.420.80:FF:000001">
    <property type="entry name" value="30S ribosomal protein S11"/>
    <property type="match status" value="1"/>
</dbReference>
<dbReference type="Gene3D" id="3.30.420.80">
    <property type="entry name" value="Ribosomal protein S11"/>
    <property type="match status" value="1"/>
</dbReference>
<dbReference type="HAMAP" id="MF_01310">
    <property type="entry name" value="Ribosomal_uS11"/>
    <property type="match status" value="1"/>
</dbReference>
<dbReference type="InterPro" id="IPR001971">
    <property type="entry name" value="Ribosomal_uS11"/>
</dbReference>
<dbReference type="InterPro" id="IPR019981">
    <property type="entry name" value="Ribosomal_uS11_bac-type"/>
</dbReference>
<dbReference type="InterPro" id="IPR018102">
    <property type="entry name" value="Ribosomal_uS11_CS"/>
</dbReference>
<dbReference type="InterPro" id="IPR036967">
    <property type="entry name" value="Ribosomal_uS11_sf"/>
</dbReference>
<dbReference type="NCBIfam" id="NF003698">
    <property type="entry name" value="PRK05309.1"/>
    <property type="match status" value="1"/>
</dbReference>
<dbReference type="NCBIfam" id="TIGR03632">
    <property type="entry name" value="uS11_bact"/>
    <property type="match status" value="1"/>
</dbReference>
<dbReference type="PANTHER" id="PTHR11759">
    <property type="entry name" value="40S RIBOSOMAL PROTEIN S14/30S RIBOSOMAL PROTEIN S11"/>
    <property type="match status" value="1"/>
</dbReference>
<dbReference type="Pfam" id="PF00411">
    <property type="entry name" value="Ribosomal_S11"/>
    <property type="match status" value="1"/>
</dbReference>
<dbReference type="PIRSF" id="PIRSF002131">
    <property type="entry name" value="Ribosomal_S11"/>
    <property type="match status" value="1"/>
</dbReference>
<dbReference type="SUPFAM" id="SSF53137">
    <property type="entry name" value="Translational machinery components"/>
    <property type="match status" value="1"/>
</dbReference>
<dbReference type="PROSITE" id="PS00054">
    <property type="entry name" value="RIBOSOMAL_S11"/>
    <property type="match status" value="1"/>
</dbReference>
<reference key="1">
    <citation type="journal article" date="2005" name="Proc. Natl. Acad. Sci. U.S.A.">
        <title>The complete genome sequence of Mycobacterium avium subspecies paratuberculosis.</title>
        <authorList>
            <person name="Li L."/>
            <person name="Bannantine J.P."/>
            <person name="Zhang Q."/>
            <person name="Amonsin A."/>
            <person name="May B.J."/>
            <person name="Alt D."/>
            <person name="Banerji N."/>
            <person name="Kanjilal S."/>
            <person name="Kapur V."/>
        </authorList>
    </citation>
    <scope>NUCLEOTIDE SEQUENCE [LARGE SCALE GENOMIC DNA]</scope>
    <source>
        <strain>ATCC BAA-968 / K-10</strain>
    </source>
</reference>
<feature type="chain" id="PRO_0000123180" description="Small ribosomal subunit protein uS11">
    <location>
        <begin position="1"/>
        <end position="138"/>
    </location>
</feature>
<feature type="region of interest" description="Disordered" evidence="2">
    <location>
        <begin position="1"/>
        <end position="27"/>
    </location>
</feature>
<feature type="compositionally biased region" description="Low complexity" evidence="2">
    <location>
        <begin position="1"/>
        <end position="12"/>
    </location>
</feature>
<feature type="compositionally biased region" description="Basic residues" evidence="2">
    <location>
        <begin position="13"/>
        <end position="22"/>
    </location>
</feature>